<comment type="function">
    <text evidence="1">One of the primary rRNA binding proteins. Required for association of the 30S and 50S subunits to form the 70S ribosome, for tRNA binding and peptide bond formation. It has been suggested to have peptidyltransferase activity; this is somewhat controversial. Makes several contacts with the 16S rRNA in the 70S ribosome.</text>
</comment>
<comment type="subunit">
    <text evidence="1">Part of the 50S ribosomal subunit. Forms a bridge to the 30S subunit in the 70S ribosome.</text>
</comment>
<comment type="similarity">
    <text evidence="1">Belongs to the universal ribosomal protein uL2 family.</text>
</comment>
<organism>
    <name type="scientific">Methanosphaera stadtmanae (strain ATCC 43021 / DSM 3091 / JCM 11832 / MCB-3)</name>
    <dbReference type="NCBI Taxonomy" id="339860"/>
    <lineage>
        <taxon>Archaea</taxon>
        <taxon>Methanobacteriati</taxon>
        <taxon>Methanobacteriota</taxon>
        <taxon>Methanomada group</taxon>
        <taxon>Methanobacteria</taxon>
        <taxon>Methanobacteriales</taxon>
        <taxon>Methanobacteriaceae</taxon>
        <taxon>Methanosphaera</taxon>
    </lineage>
</organism>
<proteinExistence type="inferred from homology"/>
<sequence length="241" mass="25997">MGKRLIIQRRGRGTPTYRSSSHRFRGKVAYRSYDKLEREGSLTGIVIDIIHDPGRSAPVAVVKFDNGEEKLVLAPESIAIDDEIECGVSASIEPGNTLPLSEIPEGTPVFNIENNPGDGGKFVRSSGTYASLITHDVDKTMIEMPSGELKAFNPRSRATVGVVAGGGRKEKPFLKAGNRYHALKAKGKKMMTVRGVAMNAVDHPHGGGNRQHPGRPTTISRHAPAGRKVGSIAAKRTGKRR</sequence>
<feature type="chain" id="PRO_0000237291" description="Large ribosomal subunit protein uL2">
    <location>
        <begin position="1"/>
        <end position="241"/>
    </location>
</feature>
<feature type="region of interest" description="Disordered" evidence="2">
    <location>
        <begin position="200"/>
        <end position="241"/>
    </location>
</feature>
<reference key="1">
    <citation type="journal article" date="2006" name="J. Bacteriol.">
        <title>The genome sequence of Methanosphaera stadtmanae reveals why this human intestinal archaeon is restricted to methanol and H2 for methane formation and ATP synthesis.</title>
        <authorList>
            <person name="Fricke W.F."/>
            <person name="Seedorf H."/>
            <person name="Henne A."/>
            <person name="Kruer M."/>
            <person name="Liesegang H."/>
            <person name="Hedderich R."/>
            <person name="Gottschalk G."/>
            <person name="Thauer R.K."/>
        </authorList>
    </citation>
    <scope>NUCLEOTIDE SEQUENCE [LARGE SCALE GENOMIC DNA]</scope>
    <source>
        <strain>ATCC 43021 / DSM 3091 / JCM 11832 / MCB-3</strain>
    </source>
</reference>
<name>RL2_METST</name>
<keyword id="KW-1185">Reference proteome</keyword>
<keyword id="KW-0687">Ribonucleoprotein</keyword>
<keyword id="KW-0689">Ribosomal protein</keyword>
<keyword id="KW-0694">RNA-binding</keyword>
<keyword id="KW-0699">rRNA-binding</keyword>
<evidence type="ECO:0000255" key="1">
    <source>
        <dbReference type="HAMAP-Rule" id="MF_01320"/>
    </source>
</evidence>
<evidence type="ECO:0000256" key="2">
    <source>
        <dbReference type="SAM" id="MobiDB-lite"/>
    </source>
</evidence>
<evidence type="ECO:0000305" key="3"/>
<protein>
    <recommendedName>
        <fullName evidence="1">Large ribosomal subunit protein uL2</fullName>
    </recommendedName>
    <alternativeName>
        <fullName evidence="3">50S ribosomal protein L2</fullName>
    </alternativeName>
</protein>
<dbReference type="EMBL" id="CP000102">
    <property type="protein sequence ID" value="ABC57294.1"/>
    <property type="molecule type" value="Genomic_DNA"/>
</dbReference>
<dbReference type="RefSeq" id="WP_011406493.1">
    <property type="nucleotide sequence ID" value="NC_007681.1"/>
</dbReference>
<dbReference type="SMR" id="Q2NFV9"/>
<dbReference type="STRING" id="339860.Msp_0906"/>
<dbReference type="KEGG" id="mst:Msp_0906"/>
<dbReference type="eggNOG" id="arCOG04067">
    <property type="taxonomic scope" value="Archaea"/>
</dbReference>
<dbReference type="HOGENOM" id="CLU_036235_0_3_2"/>
<dbReference type="OrthoDB" id="5987at2157"/>
<dbReference type="Proteomes" id="UP000001931">
    <property type="component" value="Chromosome"/>
</dbReference>
<dbReference type="GO" id="GO:0022625">
    <property type="term" value="C:cytosolic large ribosomal subunit"/>
    <property type="evidence" value="ECO:0007669"/>
    <property type="project" value="TreeGrafter"/>
</dbReference>
<dbReference type="GO" id="GO:0019843">
    <property type="term" value="F:rRNA binding"/>
    <property type="evidence" value="ECO:0007669"/>
    <property type="project" value="UniProtKB-UniRule"/>
</dbReference>
<dbReference type="GO" id="GO:0003735">
    <property type="term" value="F:structural constituent of ribosome"/>
    <property type="evidence" value="ECO:0007669"/>
    <property type="project" value="InterPro"/>
</dbReference>
<dbReference type="GO" id="GO:0002181">
    <property type="term" value="P:cytoplasmic translation"/>
    <property type="evidence" value="ECO:0007669"/>
    <property type="project" value="TreeGrafter"/>
</dbReference>
<dbReference type="FunFam" id="2.40.50.140:FF:000020">
    <property type="entry name" value="60S ribosomal protein L2"/>
    <property type="match status" value="1"/>
</dbReference>
<dbReference type="FunFam" id="4.10.950.10:FF:000002">
    <property type="entry name" value="60S ribosomal protein L2"/>
    <property type="match status" value="1"/>
</dbReference>
<dbReference type="Gene3D" id="2.30.30.30">
    <property type="match status" value="1"/>
</dbReference>
<dbReference type="Gene3D" id="2.40.50.140">
    <property type="entry name" value="Nucleic acid-binding proteins"/>
    <property type="match status" value="1"/>
</dbReference>
<dbReference type="Gene3D" id="4.10.950.10">
    <property type="entry name" value="Ribosomal protein L2, domain 3"/>
    <property type="match status" value="1"/>
</dbReference>
<dbReference type="HAMAP" id="MF_01320_A">
    <property type="entry name" value="Ribosomal_uL2_A"/>
    <property type="match status" value="1"/>
</dbReference>
<dbReference type="InterPro" id="IPR012340">
    <property type="entry name" value="NA-bd_OB-fold"/>
</dbReference>
<dbReference type="InterPro" id="IPR014722">
    <property type="entry name" value="Rib_uL2_dom2"/>
</dbReference>
<dbReference type="InterPro" id="IPR002171">
    <property type="entry name" value="Ribosomal_uL2"/>
</dbReference>
<dbReference type="InterPro" id="IPR023672">
    <property type="entry name" value="Ribosomal_uL2_arc_euk"/>
</dbReference>
<dbReference type="InterPro" id="IPR022669">
    <property type="entry name" value="Ribosomal_uL2_C"/>
</dbReference>
<dbReference type="InterPro" id="IPR014726">
    <property type="entry name" value="Ribosomal_uL2_dom3"/>
</dbReference>
<dbReference type="InterPro" id="IPR022666">
    <property type="entry name" value="Ribosomal_uL2_RNA-bd_dom"/>
</dbReference>
<dbReference type="InterPro" id="IPR008991">
    <property type="entry name" value="Translation_prot_SH3-like_sf"/>
</dbReference>
<dbReference type="NCBIfam" id="NF007180">
    <property type="entry name" value="PRK09612.1"/>
    <property type="match status" value="1"/>
</dbReference>
<dbReference type="PANTHER" id="PTHR13691:SF16">
    <property type="entry name" value="LARGE RIBOSOMAL SUBUNIT PROTEIN UL2"/>
    <property type="match status" value="1"/>
</dbReference>
<dbReference type="PANTHER" id="PTHR13691">
    <property type="entry name" value="RIBOSOMAL PROTEIN L2"/>
    <property type="match status" value="1"/>
</dbReference>
<dbReference type="Pfam" id="PF00181">
    <property type="entry name" value="Ribosomal_L2"/>
    <property type="match status" value="1"/>
</dbReference>
<dbReference type="Pfam" id="PF03947">
    <property type="entry name" value="Ribosomal_L2_C"/>
    <property type="match status" value="1"/>
</dbReference>
<dbReference type="PIRSF" id="PIRSF002158">
    <property type="entry name" value="Ribosomal_L2"/>
    <property type="match status" value="1"/>
</dbReference>
<dbReference type="SMART" id="SM01383">
    <property type="entry name" value="Ribosomal_L2"/>
    <property type="match status" value="1"/>
</dbReference>
<dbReference type="SMART" id="SM01382">
    <property type="entry name" value="Ribosomal_L2_C"/>
    <property type="match status" value="1"/>
</dbReference>
<dbReference type="SUPFAM" id="SSF50249">
    <property type="entry name" value="Nucleic acid-binding proteins"/>
    <property type="match status" value="1"/>
</dbReference>
<dbReference type="SUPFAM" id="SSF50104">
    <property type="entry name" value="Translation proteins SH3-like domain"/>
    <property type="match status" value="1"/>
</dbReference>
<gene>
    <name evidence="1" type="primary">rpl2</name>
    <name type="ordered locus">Msp_0906</name>
</gene>
<accession>Q2NFV9</accession>